<keyword id="KW-0238">DNA-binding</keyword>
<keyword id="KW-0539">Nucleus</keyword>
<keyword id="KW-0804">Transcription</keyword>
<keyword id="KW-0805">Transcription regulation</keyword>
<feature type="chain" id="PRO_0000199497" description="MADS-box protein GGM13">
    <location>
        <begin position="1"/>
        <end position="237"/>
    </location>
</feature>
<feature type="domain" description="MADS-box" evidence="1">
    <location>
        <begin position="1"/>
        <end position="61"/>
    </location>
</feature>
<feature type="domain" description="K-box" evidence="2">
    <location>
        <begin position="84"/>
        <end position="174"/>
    </location>
</feature>
<name>GGM13_GNEGN</name>
<dbReference type="EMBL" id="AJ132219">
    <property type="protein sequence ID" value="CAB44459.1"/>
    <property type="molecule type" value="mRNA"/>
</dbReference>
<dbReference type="SMR" id="Q9XGJ4"/>
<dbReference type="GO" id="GO:0005634">
    <property type="term" value="C:nucleus"/>
    <property type="evidence" value="ECO:0007669"/>
    <property type="project" value="UniProtKB-SubCell"/>
</dbReference>
<dbReference type="GO" id="GO:0003700">
    <property type="term" value="F:DNA-binding transcription factor activity"/>
    <property type="evidence" value="ECO:0007669"/>
    <property type="project" value="InterPro"/>
</dbReference>
<dbReference type="GO" id="GO:0046983">
    <property type="term" value="F:protein dimerization activity"/>
    <property type="evidence" value="ECO:0007669"/>
    <property type="project" value="InterPro"/>
</dbReference>
<dbReference type="GO" id="GO:0000977">
    <property type="term" value="F:RNA polymerase II transcription regulatory region sequence-specific DNA binding"/>
    <property type="evidence" value="ECO:0007669"/>
    <property type="project" value="InterPro"/>
</dbReference>
<dbReference type="GO" id="GO:0045944">
    <property type="term" value="P:positive regulation of transcription by RNA polymerase II"/>
    <property type="evidence" value="ECO:0007669"/>
    <property type="project" value="InterPro"/>
</dbReference>
<dbReference type="CDD" id="cd00265">
    <property type="entry name" value="MADS_MEF2_like"/>
    <property type="match status" value="1"/>
</dbReference>
<dbReference type="FunFam" id="3.40.1810.10:FF:000003">
    <property type="entry name" value="MADS-box transcription factor MADS-MC"/>
    <property type="match status" value="1"/>
</dbReference>
<dbReference type="Gene3D" id="3.40.1810.10">
    <property type="entry name" value="Transcription factor, MADS-box"/>
    <property type="match status" value="1"/>
</dbReference>
<dbReference type="InterPro" id="IPR050142">
    <property type="entry name" value="MADS-box/MEF2_TF"/>
</dbReference>
<dbReference type="InterPro" id="IPR033896">
    <property type="entry name" value="MEF2-like_N"/>
</dbReference>
<dbReference type="InterPro" id="IPR002487">
    <property type="entry name" value="TF_Kbox"/>
</dbReference>
<dbReference type="InterPro" id="IPR002100">
    <property type="entry name" value="TF_MADSbox"/>
</dbReference>
<dbReference type="InterPro" id="IPR036879">
    <property type="entry name" value="TF_MADSbox_sf"/>
</dbReference>
<dbReference type="PANTHER" id="PTHR48019">
    <property type="entry name" value="SERUM RESPONSE FACTOR HOMOLOG"/>
    <property type="match status" value="1"/>
</dbReference>
<dbReference type="Pfam" id="PF01486">
    <property type="entry name" value="K-box"/>
    <property type="match status" value="1"/>
</dbReference>
<dbReference type="Pfam" id="PF00319">
    <property type="entry name" value="SRF-TF"/>
    <property type="match status" value="1"/>
</dbReference>
<dbReference type="PRINTS" id="PR00404">
    <property type="entry name" value="MADSDOMAIN"/>
</dbReference>
<dbReference type="SMART" id="SM00432">
    <property type="entry name" value="MADS"/>
    <property type="match status" value="1"/>
</dbReference>
<dbReference type="SUPFAM" id="SSF55455">
    <property type="entry name" value="SRF-like"/>
    <property type="match status" value="1"/>
</dbReference>
<dbReference type="PROSITE" id="PS51297">
    <property type="entry name" value="K_BOX"/>
    <property type="match status" value="1"/>
</dbReference>
<dbReference type="PROSITE" id="PS00350">
    <property type="entry name" value="MADS_BOX_1"/>
    <property type="match status" value="1"/>
</dbReference>
<dbReference type="PROSITE" id="PS50066">
    <property type="entry name" value="MADS_BOX_2"/>
    <property type="match status" value="1"/>
</dbReference>
<sequence>MGRGKIEIKRIENTTNRQVTFSKRRGGLLKKAHELSVLCDAELGLIIFSSSGKLFEYSSASSSMKKIIERYQKVSGARITEYDNQHLYCEMTRMKNENEKLQTNIRRMMGEDLTSLTMTELHHLGQQLESASSRVRSRKNQLMLQQLENLRRKERILEDQNSHLCRLLAEQQAAVEGVQEPLLEFGVFCPPPDNKTAAAANAGPLHLGHHLPAFRLQPTQPNLQESSIVPNRPVLQL</sequence>
<proteinExistence type="evidence at transcript level"/>
<evidence type="ECO:0000255" key="1">
    <source>
        <dbReference type="PROSITE-ProRule" id="PRU00251"/>
    </source>
</evidence>
<evidence type="ECO:0000255" key="2">
    <source>
        <dbReference type="PROSITE-ProRule" id="PRU00629"/>
    </source>
</evidence>
<evidence type="ECO:0000269" key="3">
    <source>
    </source>
</evidence>
<protein>
    <recommendedName>
        <fullName>MADS-box protein GGM13</fullName>
    </recommendedName>
</protein>
<accession>Q9XGJ4</accession>
<comment type="function">
    <text>Probable transcription factor.</text>
</comment>
<comment type="subcellular location">
    <subcellularLocation>
        <location evidence="1">Nucleus</location>
    </subcellularLocation>
</comment>
<comment type="tissue specificity">
    <text evidence="3">Expression specific for female reproductive structures: strong at the adaxial base of the cupules, where ovules will later develop, then in the outermost cell layer of the nucellus, in the inner envelope, and in the inner half of the middle envelope at late stage of ovule development.</text>
</comment>
<reference key="1">
    <citation type="journal article" date="1999" name="Proc. Natl. Acad. Sci. U.S.A.">
        <title>MADS-box genes reveal that gnetophytes are more closely related to conifers than to flowering plants.</title>
        <authorList>
            <person name="Winter K.-U."/>
            <person name="Becker A."/>
            <person name="Muenster T."/>
            <person name="Kim J.T."/>
            <person name="Saedler H."/>
            <person name="Theissen G."/>
        </authorList>
    </citation>
    <scope>NUCLEOTIDE SEQUENCE [MRNA]</scope>
</reference>
<reference key="2">
    <citation type="journal article" date="2002" name="Mol. Genet. Genomics">
        <title>A novel MADS-box gene subfamily with sistergroup relationship to class B floral homeotic genes.</title>
        <authorList>
            <person name="Becker A."/>
            <person name="Kaufmann K."/>
            <person name="Freialdenhoven A."/>
            <person name="Vincent C."/>
            <person name="Li M.-A."/>
            <person name="Saedler H."/>
            <person name="Theissen G."/>
        </authorList>
    </citation>
    <scope>TISSUE SPECIFICITY</scope>
</reference>
<organism>
    <name type="scientific">Gnetum gnemon</name>
    <name type="common">Spanish joint-fir</name>
    <name type="synonym">Gnetum acutatum</name>
    <dbReference type="NCBI Taxonomy" id="3382"/>
    <lineage>
        <taxon>Eukaryota</taxon>
        <taxon>Viridiplantae</taxon>
        <taxon>Streptophyta</taxon>
        <taxon>Embryophyta</taxon>
        <taxon>Tracheophyta</taxon>
        <taxon>Spermatophyta</taxon>
        <taxon>Gnetopsida</taxon>
        <taxon>Gnetidae</taxon>
        <taxon>Gnetales</taxon>
        <taxon>Gnetaceae</taxon>
        <taxon>Gnetum</taxon>
    </lineage>
</organism>
<gene>
    <name type="primary">GGM13</name>
</gene>